<proteinExistence type="evidence at transcript level"/>
<evidence type="ECO:0000250" key="1"/>
<evidence type="ECO:0000250" key="2">
    <source>
        <dbReference type="UniProtKB" id="Q15040"/>
    </source>
</evidence>
<evidence type="ECO:0000255" key="3">
    <source>
        <dbReference type="PROSITE-ProRule" id="PRU00331"/>
    </source>
</evidence>
<name>JOS1_BOVIN</name>
<sequence length="202" mass="23181">MSCVPWKGDKVKSESLELPQAAPPQIYHEKQRRELCALHALNNVFQDSNAFTRETLQEIFQRLSPNTMVTPHKKSMLGNGNYDVNVIMAALQTKGYEAVWWDKRRDVGAIALTNVMGFIMNLPSSLCWGPLKLPLKRQHWICVREVGGAYYNLDSKLKMPEWIGGKSELRKFLKHHLRGKNCELLLVVPEEVEAHQSWRADV</sequence>
<gene>
    <name type="primary">JOSD1</name>
</gene>
<organism>
    <name type="scientific">Bos taurus</name>
    <name type="common">Bovine</name>
    <dbReference type="NCBI Taxonomy" id="9913"/>
    <lineage>
        <taxon>Eukaryota</taxon>
        <taxon>Metazoa</taxon>
        <taxon>Chordata</taxon>
        <taxon>Craniata</taxon>
        <taxon>Vertebrata</taxon>
        <taxon>Euteleostomi</taxon>
        <taxon>Mammalia</taxon>
        <taxon>Eutheria</taxon>
        <taxon>Laurasiatheria</taxon>
        <taxon>Artiodactyla</taxon>
        <taxon>Ruminantia</taxon>
        <taxon>Pecora</taxon>
        <taxon>Bovidae</taxon>
        <taxon>Bovinae</taxon>
        <taxon>Bos</taxon>
    </lineage>
</organism>
<dbReference type="EC" id="3.4.19.12"/>
<dbReference type="EMBL" id="BT020624">
    <property type="protein sequence ID" value="AAX08641.1"/>
    <property type="molecule type" value="mRNA"/>
</dbReference>
<dbReference type="EMBL" id="BC140477">
    <property type="protein sequence ID" value="AAI40478.1"/>
    <property type="molecule type" value="mRNA"/>
</dbReference>
<dbReference type="RefSeq" id="NP_001014898.1">
    <property type="nucleotide sequence ID" value="NM_001014898.2"/>
</dbReference>
<dbReference type="RefSeq" id="XP_005207376.1">
    <property type="nucleotide sequence ID" value="XM_005207319.4"/>
</dbReference>
<dbReference type="RefSeq" id="XP_005207377.1">
    <property type="nucleotide sequence ID" value="XM_005207320.5"/>
</dbReference>
<dbReference type="RefSeq" id="XP_059742274.1">
    <property type="nucleotide sequence ID" value="XM_059886291.1"/>
</dbReference>
<dbReference type="SMR" id="Q5EAE5"/>
<dbReference type="FunCoup" id="Q5EAE5">
    <property type="interactions" value="2208"/>
</dbReference>
<dbReference type="MEROPS" id="C86.004"/>
<dbReference type="PaxDb" id="9913-ENSBTAP00000013418"/>
<dbReference type="Ensembl" id="ENSBTAT00000123637.1">
    <property type="protein sequence ID" value="ENSBTAP00000095965.1"/>
    <property type="gene ID" value="ENSBTAG00000065598.1"/>
</dbReference>
<dbReference type="GeneID" id="510781"/>
<dbReference type="KEGG" id="bta:510781"/>
<dbReference type="CTD" id="9929"/>
<dbReference type="eggNOG" id="KOG2934">
    <property type="taxonomic scope" value="Eukaryota"/>
</dbReference>
<dbReference type="GeneTree" id="ENSGT00390000009228"/>
<dbReference type="HOGENOM" id="CLU_103892_0_0_1"/>
<dbReference type="InParanoid" id="Q5EAE5"/>
<dbReference type="OrthoDB" id="422700at2759"/>
<dbReference type="TreeFam" id="TF313660"/>
<dbReference type="Proteomes" id="UP000009136">
    <property type="component" value="Chromosome 5"/>
</dbReference>
<dbReference type="GO" id="GO:0005737">
    <property type="term" value="C:cytoplasm"/>
    <property type="evidence" value="ECO:0007669"/>
    <property type="project" value="UniProtKB-SubCell"/>
</dbReference>
<dbReference type="GO" id="GO:0005886">
    <property type="term" value="C:plasma membrane"/>
    <property type="evidence" value="ECO:0007669"/>
    <property type="project" value="UniProtKB-SubCell"/>
</dbReference>
<dbReference type="GO" id="GO:0004843">
    <property type="term" value="F:cysteine-type deubiquitinase activity"/>
    <property type="evidence" value="ECO:0000318"/>
    <property type="project" value="GO_Central"/>
</dbReference>
<dbReference type="GO" id="GO:0048870">
    <property type="term" value="P:cell motility"/>
    <property type="evidence" value="ECO:0007669"/>
    <property type="project" value="Ensembl"/>
</dbReference>
<dbReference type="GO" id="GO:0006897">
    <property type="term" value="P:endocytosis"/>
    <property type="evidence" value="ECO:0007669"/>
    <property type="project" value="Ensembl"/>
</dbReference>
<dbReference type="GO" id="GO:0044091">
    <property type="term" value="P:membrane biogenesis"/>
    <property type="evidence" value="ECO:0007669"/>
    <property type="project" value="Ensembl"/>
</dbReference>
<dbReference type="GO" id="GO:0061024">
    <property type="term" value="P:membrane organization"/>
    <property type="evidence" value="ECO:0007669"/>
    <property type="project" value="Ensembl"/>
</dbReference>
<dbReference type="GO" id="GO:0016579">
    <property type="term" value="P:protein deubiquitination"/>
    <property type="evidence" value="ECO:0007669"/>
    <property type="project" value="Ensembl"/>
</dbReference>
<dbReference type="GO" id="GO:0006508">
    <property type="term" value="P:proteolysis"/>
    <property type="evidence" value="ECO:0007669"/>
    <property type="project" value="UniProtKB-KW"/>
</dbReference>
<dbReference type="FunFam" id="3.90.70.40:FF:000002">
    <property type="entry name" value="josephin-1 isoform X2"/>
    <property type="match status" value="1"/>
</dbReference>
<dbReference type="Gene3D" id="3.90.70.40">
    <property type="match status" value="1"/>
</dbReference>
<dbReference type="InterPro" id="IPR040053">
    <property type="entry name" value="JOSD1/2"/>
</dbReference>
<dbReference type="InterPro" id="IPR006155">
    <property type="entry name" value="Josephin"/>
</dbReference>
<dbReference type="PANTHER" id="PTHR13291">
    <property type="entry name" value="JOSEPHIN 1, 2"/>
    <property type="match status" value="1"/>
</dbReference>
<dbReference type="PANTHER" id="PTHR13291:SF1">
    <property type="entry name" value="JOSEPHIN-1"/>
    <property type="match status" value="1"/>
</dbReference>
<dbReference type="Pfam" id="PF02099">
    <property type="entry name" value="Josephin"/>
    <property type="match status" value="1"/>
</dbReference>
<dbReference type="SMART" id="SM01246">
    <property type="entry name" value="Josephin"/>
    <property type="match status" value="1"/>
</dbReference>
<dbReference type="PROSITE" id="PS50957">
    <property type="entry name" value="JOSEPHIN"/>
    <property type="match status" value="1"/>
</dbReference>
<protein>
    <recommendedName>
        <fullName>Josephin-1</fullName>
        <ecNumber>3.4.19.12</ecNumber>
    </recommendedName>
    <alternativeName>
        <fullName>Josephin domain-containing protein 1</fullName>
    </alternativeName>
</protein>
<reference key="1">
    <citation type="journal article" date="2005" name="BMC Genomics">
        <title>Characterization of 954 bovine full-CDS cDNA sequences.</title>
        <authorList>
            <person name="Harhay G.P."/>
            <person name="Sonstegard T.S."/>
            <person name="Keele J.W."/>
            <person name="Heaton M.P."/>
            <person name="Clawson M.L."/>
            <person name="Snelling W.M."/>
            <person name="Wiedmann R.T."/>
            <person name="Van Tassell C.P."/>
            <person name="Smith T.P.L."/>
        </authorList>
    </citation>
    <scope>NUCLEOTIDE SEQUENCE [LARGE SCALE MRNA]</scope>
</reference>
<reference key="2">
    <citation type="submission" date="2007-04" db="EMBL/GenBank/DDBJ databases">
        <authorList>
            <consortium name="NIH - Mammalian Gene Collection (MGC) project"/>
        </authorList>
    </citation>
    <scope>NUCLEOTIDE SEQUENCE [LARGE SCALE MRNA]</scope>
    <source>
        <strain>Hereford</strain>
        <tissue>Ascending colon</tissue>
    </source>
</reference>
<feature type="chain" id="PRO_0000053838" description="Josephin-1">
    <location>
        <begin position="1"/>
        <end position="202"/>
    </location>
</feature>
<feature type="domain" description="Josephin" evidence="3">
    <location>
        <begin position="23"/>
        <end position="202"/>
    </location>
</feature>
<feature type="active site" description="Nucleophile" evidence="3">
    <location>
        <position position="36"/>
    </location>
</feature>
<feature type="active site" description="Proton acceptor" evidence="3">
    <location>
        <position position="139"/>
    </location>
</feature>
<feature type="modified residue" description="Phosphoserine" evidence="2">
    <location>
        <position position="15"/>
    </location>
</feature>
<accession>Q5EAE5</accession>
<accession>A5D797</accession>
<comment type="function">
    <text evidence="1">Deubiquitinates monoubiquitinated probes (in vitro). When ubiquitinated, cleaves 'Lys-63'-linked and 'Lys-48'-linked poly-ubiquitin chains (in vitro), hence may act as a deubiquitinating enzyme. May increase macropinocytosis and suppress clathrin- and caveolae-mediated endocytosis. May enhance membrane dynamics and cell motility independently of its catalytic activity (By similarity).</text>
</comment>
<comment type="catalytic activity">
    <reaction>
        <text>Thiol-dependent hydrolysis of ester, thioester, amide, peptide and isopeptide bonds formed by the C-terminal Gly of ubiquitin (a 76-residue protein attached to proteins as an intracellular targeting signal).</text>
        <dbReference type="EC" id="3.4.19.12"/>
    </reaction>
</comment>
<comment type="subunit">
    <text evidence="1">Interacts with beta-actin/ACTB.</text>
</comment>
<comment type="subcellular location">
    <subcellularLocation>
        <location evidence="1">Cell membrane</location>
    </subcellularLocation>
    <subcellularLocation>
        <location evidence="1">Cytoplasm</location>
    </subcellularLocation>
    <text evidence="1">Ubiquitination increases localization the plasma membrane. In the cytosol, the unubiquitinated form may be associated with the cytoskeleton via ACTB-binding.</text>
</comment>
<comment type="PTM">
    <text evidence="1">Monoubiquitinated. Ubiquitination activates deubiquitination activity in vitro.</text>
</comment>
<keyword id="KW-1003">Cell membrane</keyword>
<keyword id="KW-0963">Cytoplasm</keyword>
<keyword id="KW-0378">Hydrolase</keyword>
<keyword id="KW-0472">Membrane</keyword>
<keyword id="KW-0597">Phosphoprotein</keyword>
<keyword id="KW-0645">Protease</keyword>
<keyword id="KW-1185">Reference proteome</keyword>
<keyword id="KW-0832">Ubl conjugation</keyword>
<keyword id="KW-0833">Ubl conjugation pathway</keyword>